<keyword id="KW-0007">Acetylation</keyword>
<keyword id="KW-0012">Acyltransferase</keyword>
<keyword id="KW-0106">Calcium</keyword>
<keyword id="KW-1003">Cell membrane</keyword>
<keyword id="KW-0158">Chromosome</keyword>
<keyword id="KW-0963">Cytoplasm</keyword>
<keyword id="KW-0903">Direct protein sequencing</keyword>
<keyword id="KW-1015">Disulfide bond</keyword>
<keyword id="KW-0272">Extracellular matrix</keyword>
<keyword id="KW-0342">GTP-binding</keyword>
<keyword id="KW-0378">Hydrolase</keyword>
<keyword id="KW-1017">Isopeptide bond</keyword>
<keyword id="KW-0472">Membrane</keyword>
<keyword id="KW-0479">Metal-binding</keyword>
<keyword id="KW-0496">Mitochondrion</keyword>
<keyword id="KW-0547">Nucleotide-binding</keyword>
<keyword id="KW-0539">Nucleus</keyword>
<keyword id="KW-0645">Protease</keyword>
<keyword id="KW-0702">S-nitrosylation</keyword>
<keyword id="KW-0964">Secreted</keyword>
<keyword id="KW-0808">Transferase</keyword>
<name>TGM2_CAVCU</name>
<evidence type="ECO:0000250" key="1">
    <source>
        <dbReference type="UniProtKB" id="P00488"/>
    </source>
</evidence>
<evidence type="ECO:0000250" key="2">
    <source>
        <dbReference type="UniProtKB" id="P21980"/>
    </source>
</evidence>
<evidence type="ECO:0000250" key="3">
    <source>
        <dbReference type="UniProtKB" id="P21981"/>
    </source>
</evidence>
<evidence type="ECO:0000250" key="4">
    <source>
        <dbReference type="UniProtKB" id="P52181"/>
    </source>
</evidence>
<evidence type="ECO:0000250" key="5">
    <source>
        <dbReference type="UniProtKB" id="Q9WVJ6"/>
    </source>
</evidence>
<evidence type="ECO:0000255" key="6">
    <source>
        <dbReference type="PROSITE-ProRule" id="PRU10024"/>
    </source>
</evidence>
<evidence type="ECO:0000269" key="7">
    <source>
    </source>
</evidence>
<evidence type="ECO:0000269" key="8">
    <source>
    </source>
</evidence>
<evidence type="ECO:0000269" key="9">
    <source>
    </source>
</evidence>
<evidence type="ECO:0000269" key="10">
    <source>
    </source>
</evidence>
<evidence type="ECO:0000269" key="11">
    <source>
    </source>
</evidence>
<evidence type="ECO:0000269" key="12">
    <source>
    </source>
</evidence>
<evidence type="ECO:0000269" key="13">
    <source>
    </source>
</evidence>
<evidence type="ECO:0000269" key="14">
    <source>
    </source>
</evidence>
<evidence type="ECO:0000269" key="15">
    <source ref="6"/>
</evidence>
<evidence type="ECO:0000303" key="16">
    <source>
    </source>
</evidence>
<evidence type="ECO:0000303" key="17">
    <source>
    </source>
</evidence>
<evidence type="ECO:0000303" key="18">
    <source>
    </source>
</evidence>
<evidence type="ECO:0000303" key="19">
    <source>
    </source>
</evidence>
<evidence type="ECO:0000305" key="20"/>
<accession>P08587</accession>
<feature type="initiator methionine" description="Removed" evidence="11 14">
    <location>
        <position position="1"/>
    </location>
</feature>
<feature type="chain" id="PRO_0000213706" description="Protein-glutamine gamma-glutamyltransferase 2">
    <location>
        <begin position="2"/>
        <end position="690"/>
    </location>
</feature>
<feature type="active site" evidence="6">
    <location>
        <position position="277"/>
    </location>
</feature>
<feature type="active site" evidence="6">
    <location>
        <position position="335"/>
    </location>
</feature>
<feature type="active site" evidence="6">
    <location>
        <position position="358"/>
    </location>
</feature>
<feature type="binding site" evidence="1">
    <location>
        <position position="398"/>
    </location>
    <ligand>
        <name>Ca(2+)</name>
        <dbReference type="ChEBI" id="CHEBI:29108"/>
    </ligand>
</feature>
<feature type="binding site" evidence="1">
    <location>
        <position position="400"/>
    </location>
    <ligand>
        <name>Ca(2+)</name>
        <dbReference type="ChEBI" id="CHEBI:29108"/>
    </ligand>
</feature>
<feature type="binding site" evidence="2">
    <location>
        <position position="436"/>
    </location>
    <ligand>
        <name>Ca(2+)</name>
        <dbReference type="ChEBI" id="CHEBI:29108"/>
    </ligand>
</feature>
<feature type="binding site" evidence="1">
    <location>
        <position position="446"/>
    </location>
    <ligand>
        <name>Ca(2+)</name>
        <dbReference type="ChEBI" id="CHEBI:29108"/>
    </ligand>
</feature>
<feature type="binding site" evidence="1">
    <location>
        <position position="451"/>
    </location>
    <ligand>
        <name>Ca(2+)</name>
        <dbReference type="ChEBI" id="CHEBI:29108"/>
    </ligand>
</feature>
<feature type="binding site" evidence="2">
    <location>
        <begin position="479"/>
        <end position="486"/>
    </location>
    <ligand>
        <name>GTP</name>
        <dbReference type="ChEBI" id="CHEBI:37565"/>
    </ligand>
</feature>
<feature type="binding site" evidence="2">
    <location>
        <position position="542"/>
    </location>
    <ligand>
        <name>Ca(2+)</name>
        <dbReference type="ChEBI" id="CHEBI:29108"/>
    </ligand>
</feature>
<feature type="binding site" evidence="2">
    <location>
        <begin position="583"/>
        <end position="586"/>
    </location>
    <ligand>
        <name>GTP</name>
        <dbReference type="ChEBI" id="CHEBI:37565"/>
    </ligand>
</feature>
<feature type="site" description="Important for catalytic activity" evidence="4">
    <location>
        <position position="519"/>
    </location>
</feature>
<feature type="modified residue" description="N-acetylalanine" evidence="11">
    <location>
        <position position="2"/>
    </location>
</feature>
<feature type="modified residue" description="N6-acetyllysine" evidence="3">
    <location>
        <position position="467"/>
    </location>
</feature>
<feature type="disulfide bond" description="Alternate" evidence="2">
    <location>
        <begin position="230"/>
        <end position="370"/>
    </location>
</feature>
<feature type="disulfide bond" description="Alternate" evidence="2">
    <location>
        <begin position="370"/>
        <end position="371"/>
    </location>
</feature>
<feature type="cross-link" description="Isoglutamyl lysine isopeptide (Gln-Lys) (interchain with K-?)" evidence="13">
    <location>
        <position position="636"/>
    </location>
</feature>
<feature type="sequence conflict" description="In Ref. 2; AA sequence." evidence="20" ref="2">
    <original>AE</original>
    <variation>EA</variation>
    <location>
        <begin position="2"/>
        <end position="3"/>
    </location>
</feature>
<feature type="sequence conflict" description="In Ref. 4; BAA00068." evidence="20" ref="4">
    <original>G</original>
    <variation>A</variation>
    <location>
        <position position="292"/>
    </location>
</feature>
<feature type="sequence conflict" description="In Ref. 4; BAA00068." evidence="20" ref="4">
    <original>CWVESWMTRPDLEPGYEGW</original>
    <variation>SLLGGVVDDQAGPGAWVRGV</variation>
    <location>
        <begin position="336"/>
        <end position="354"/>
    </location>
</feature>
<dbReference type="EC" id="2.3.2.13" evidence="8 13"/>
<dbReference type="EC" id="3.4.-.-" evidence="2"/>
<dbReference type="EC" id="3.5.1.44" evidence="8"/>
<dbReference type="EC" id="2.3.1.-" evidence="9 10 7"/>
<dbReference type="EMBL" id="M19646">
    <property type="protein sequence ID" value="AAA37056.1"/>
    <property type="molecule type" value="mRNA"/>
</dbReference>
<dbReference type="EMBL" id="D00114">
    <property type="protein sequence ID" value="BAA00068.1"/>
    <property type="molecule type" value="mRNA"/>
</dbReference>
<dbReference type="PIR" id="A29996">
    <property type="entry name" value="A29996"/>
</dbReference>
<dbReference type="SMR" id="P08587"/>
<dbReference type="IntAct" id="P08587">
    <property type="interactions" value="6"/>
</dbReference>
<dbReference type="MINT" id="P08587"/>
<dbReference type="BindingDB" id="P08587"/>
<dbReference type="ChEMBL" id="CHEMBL3988613"/>
<dbReference type="iPTMnet" id="P08587"/>
<dbReference type="KEGG" id="cpoc:100379228"/>
<dbReference type="BRENDA" id="2.3.2.13">
    <property type="organism ID" value="14541"/>
</dbReference>
<dbReference type="GO" id="GO:0000785">
    <property type="term" value="C:chromatin"/>
    <property type="evidence" value="ECO:0000250"/>
    <property type="project" value="UniProtKB"/>
</dbReference>
<dbReference type="GO" id="GO:0005829">
    <property type="term" value="C:cytosol"/>
    <property type="evidence" value="ECO:0000250"/>
    <property type="project" value="UniProtKB"/>
</dbReference>
<dbReference type="GO" id="GO:0005576">
    <property type="term" value="C:extracellular region"/>
    <property type="evidence" value="ECO:0007669"/>
    <property type="project" value="UniProtKB-KW"/>
</dbReference>
<dbReference type="GO" id="GO:0005739">
    <property type="term" value="C:mitochondrion"/>
    <property type="evidence" value="ECO:0007669"/>
    <property type="project" value="UniProtKB-SubCell"/>
</dbReference>
<dbReference type="GO" id="GO:0005634">
    <property type="term" value="C:nucleus"/>
    <property type="evidence" value="ECO:0000250"/>
    <property type="project" value="UniProtKB"/>
</dbReference>
<dbReference type="GO" id="GO:0005886">
    <property type="term" value="C:plasma membrane"/>
    <property type="evidence" value="ECO:0007669"/>
    <property type="project" value="UniProtKB-SubCell"/>
</dbReference>
<dbReference type="GO" id="GO:0005509">
    <property type="term" value="F:calcium ion binding"/>
    <property type="evidence" value="ECO:0000314"/>
    <property type="project" value="UniProtKB"/>
</dbReference>
<dbReference type="GO" id="GO:0005525">
    <property type="term" value="F:GTP binding"/>
    <property type="evidence" value="ECO:0000314"/>
    <property type="project" value="UniProtKB"/>
</dbReference>
<dbReference type="GO" id="GO:0120297">
    <property type="term" value="F:histone dopaminyltransferase activity"/>
    <property type="evidence" value="ECO:0000250"/>
    <property type="project" value="UniProtKB"/>
</dbReference>
<dbReference type="GO" id="GO:0120295">
    <property type="term" value="F:histone serotonyltransferase activity"/>
    <property type="evidence" value="ECO:0000250"/>
    <property type="project" value="UniProtKB"/>
</dbReference>
<dbReference type="GO" id="GO:0008233">
    <property type="term" value="F:peptidase activity"/>
    <property type="evidence" value="ECO:0007669"/>
    <property type="project" value="UniProtKB-KW"/>
</dbReference>
<dbReference type="GO" id="GO:0120296">
    <property type="term" value="F:peptide dopaminyltransferase activity"/>
    <property type="evidence" value="ECO:0000314"/>
    <property type="project" value="UniProtKB"/>
</dbReference>
<dbReference type="GO" id="GO:0120299">
    <property type="term" value="F:peptide histaminyltransferase activity"/>
    <property type="evidence" value="ECO:0000314"/>
    <property type="project" value="UniProtKB"/>
</dbReference>
<dbReference type="GO" id="GO:0120298">
    <property type="term" value="F:peptide noradrenalinyltransferase activity"/>
    <property type="evidence" value="ECO:0000314"/>
    <property type="project" value="UniProtKB"/>
</dbReference>
<dbReference type="GO" id="GO:0120294">
    <property type="term" value="F:peptide serotonyltransferase activity"/>
    <property type="evidence" value="ECO:0000314"/>
    <property type="project" value="UniProtKB"/>
</dbReference>
<dbReference type="GO" id="GO:0003810">
    <property type="term" value="F:protein-glutamine gamma-glutamyltransferase activity"/>
    <property type="evidence" value="ECO:0000314"/>
    <property type="project" value="UniProtKB"/>
</dbReference>
<dbReference type="GO" id="GO:0050568">
    <property type="term" value="F:protein-glutamine glutaminase activity"/>
    <property type="evidence" value="ECO:0000314"/>
    <property type="project" value="UniProtKB"/>
</dbReference>
<dbReference type="GO" id="GO:0008483">
    <property type="term" value="F:transaminase activity"/>
    <property type="evidence" value="ECO:0000314"/>
    <property type="project" value="MGI"/>
</dbReference>
<dbReference type="GO" id="GO:1903351">
    <property type="term" value="P:cellular response to dopamine"/>
    <property type="evidence" value="ECO:0000250"/>
    <property type="project" value="UniProtKB"/>
</dbReference>
<dbReference type="GO" id="GO:1904015">
    <property type="term" value="P:cellular response to serotonin"/>
    <property type="evidence" value="ECO:0000250"/>
    <property type="project" value="UniProtKB"/>
</dbReference>
<dbReference type="GO" id="GO:0018149">
    <property type="term" value="P:peptide cross-linking"/>
    <property type="evidence" value="ECO:0000314"/>
    <property type="project" value="UniProtKB"/>
</dbReference>
<dbReference type="GO" id="GO:0007200">
    <property type="term" value="P:phospholipase C-activating G protein-coupled receptor signaling pathway"/>
    <property type="evidence" value="ECO:0000250"/>
    <property type="project" value="UniProtKB"/>
</dbReference>
<dbReference type="GO" id="GO:0043065">
    <property type="term" value="P:positive regulation of apoptotic process"/>
    <property type="evidence" value="ECO:0000250"/>
    <property type="project" value="UniProtKB"/>
</dbReference>
<dbReference type="GO" id="GO:0043547">
    <property type="term" value="P:positive regulation of GTPase activity"/>
    <property type="evidence" value="ECO:0000314"/>
    <property type="project" value="UniProtKB"/>
</dbReference>
<dbReference type="GO" id="GO:0051057">
    <property type="term" value="P:positive regulation of small GTPase mediated signal transduction"/>
    <property type="evidence" value="ECO:0000314"/>
    <property type="project" value="UniProtKB"/>
</dbReference>
<dbReference type="GO" id="GO:0018277">
    <property type="term" value="P:protein deamination"/>
    <property type="evidence" value="ECO:0000314"/>
    <property type="project" value="UniProtKB"/>
</dbReference>
<dbReference type="GO" id="GO:0051260">
    <property type="term" value="P:protein homooligomerization"/>
    <property type="evidence" value="ECO:0000250"/>
    <property type="project" value="UniProtKB"/>
</dbReference>
<dbReference type="GO" id="GO:0006508">
    <property type="term" value="P:proteolysis"/>
    <property type="evidence" value="ECO:0007669"/>
    <property type="project" value="UniProtKB-KW"/>
</dbReference>
<dbReference type="GO" id="GO:2000425">
    <property type="term" value="P:regulation of apoptotic cell clearance"/>
    <property type="evidence" value="ECO:0000250"/>
    <property type="project" value="UniProtKB"/>
</dbReference>
<dbReference type="GO" id="GO:0042981">
    <property type="term" value="P:regulation of apoptotic process"/>
    <property type="evidence" value="ECO:0000250"/>
    <property type="project" value="UniProtKB"/>
</dbReference>
<dbReference type="GO" id="GO:1900046">
    <property type="term" value="P:regulation of hemostasis"/>
    <property type="evidence" value="ECO:0000314"/>
    <property type="project" value="UniProtKB"/>
</dbReference>
<dbReference type="FunFam" id="2.60.40.10:FF:000090">
    <property type="entry name" value="Protein-glutamine gamma-glutamyltransferase 2"/>
    <property type="match status" value="1"/>
</dbReference>
<dbReference type="FunFam" id="2.60.40.10:FF:000278">
    <property type="entry name" value="Protein-glutamine gamma-glutamyltransferase 2"/>
    <property type="match status" value="1"/>
</dbReference>
<dbReference type="FunFam" id="2.60.40.10:FF:001042">
    <property type="entry name" value="Protein-glutamine gamma-glutamyltransferase 2"/>
    <property type="match status" value="1"/>
</dbReference>
<dbReference type="FunFam" id="3.90.260.10:FF:000001">
    <property type="entry name" value="Protein-glutamine gamma-glutamyltransferase 2"/>
    <property type="match status" value="1"/>
</dbReference>
<dbReference type="Gene3D" id="2.60.40.10">
    <property type="entry name" value="Immunoglobulins"/>
    <property type="match status" value="3"/>
</dbReference>
<dbReference type="Gene3D" id="3.90.260.10">
    <property type="entry name" value="Transglutaminase-like"/>
    <property type="match status" value="1"/>
</dbReference>
<dbReference type="InterPro" id="IPR013783">
    <property type="entry name" value="Ig-like_fold"/>
</dbReference>
<dbReference type="InterPro" id="IPR014756">
    <property type="entry name" value="Ig_E-set"/>
</dbReference>
<dbReference type="InterPro" id="IPR038765">
    <property type="entry name" value="Papain-like_cys_pep_sf"/>
</dbReference>
<dbReference type="InterPro" id="IPR050779">
    <property type="entry name" value="Transglutaminase"/>
</dbReference>
<dbReference type="InterPro" id="IPR002931">
    <property type="entry name" value="Transglutaminase-like"/>
</dbReference>
<dbReference type="InterPro" id="IPR036985">
    <property type="entry name" value="Transglutaminase-like_sf"/>
</dbReference>
<dbReference type="InterPro" id="IPR023608">
    <property type="entry name" value="Transglutaminase_animal"/>
</dbReference>
<dbReference type="InterPro" id="IPR013808">
    <property type="entry name" value="Transglutaminase_AS"/>
</dbReference>
<dbReference type="InterPro" id="IPR008958">
    <property type="entry name" value="Transglutaminase_C"/>
</dbReference>
<dbReference type="InterPro" id="IPR036238">
    <property type="entry name" value="Transglutaminase_C_sf"/>
</dbReference>
<dbReference type="InterPro" id="IPR001102">
    <property type="entry name" value="Transglutaminase_N"/>
</dbReference>
<dbReference type="PANTHER" id="PTHR11590">
    <property type="entry name" value="PROTEIN-GLUTAMINE GAMMA-GLUTAMYLTRANSFERASE"/>
    <property type="match status" value="1"/>
</dbReference>
<dbReference type="PANTHER" id="PTHR11590:SF6">
    <property type="entry name" value="PROTEIN-GLUTAMINE GAMMA-GLUTAMYLTRANSFERASE 2"/>
    <property type="match status" value="1"/>
</dbReference>
<dbReference type="Pfam" id="PF00927">
    <property type="entry name" value="Transglut_C"/>
    <property type="match status" value="2"/>
</dbReference>
<dbReference type="Pfam" id="PF01841">
    <property type="entry name" value="Transglut_core"/>
    <property type="match status" value="1"/>
</dbReference>
<dbReference type="Pfam" id="PF00868">
    <property type="entry name" value="Transglut_N"/>
    <property type="match status" value="1"/>
</dbReference>
<dbReference type="PIRSF" id="PIRSF000459">
    <property type="entry name" value="TGM_EBP42"/>
    <property type="match status" value="1"/>
</dbReference>
<dbReference type="SMART" id="SM00460">
    <property type="entry name" value="TGc"/>
    <property type="match status" value="1"/>
</dbReference>
<dbReference type="SUPFAM" id="SSF54001">
    <property type="entry name" value="Cysteine proteinases"/>
    <property type="match status" value="1"/>
</dbReference>
<dbReference type="SUPFAM" id="SSF81296">
    <property type="entry name" value="E set domains"/>
    <property type="match status" value="1"/>
</dbReference>
<dbReference type="SUPFAM" id="SSF49309">
    <property type="entry name" value="Transglutaminase, two C-terminal domains"/>
    <property type="match status" value="2"/>
</dbReference>
<dbReference type="PROSITE" id="PS00547">
    <property type="entry name" value="TRANSGLUTAMINASES"/>
    <property type="match status" value="1"/>
</dbReference>
<proteinExistence type="evidence at protein level"/>
<gene>
    <name evidence="2" type="primary">TGM2</name>
</gene>
<sequence length="690" mass="77141">MAEDLILERCDLQLEVNGRDHRTADLCRERLVLRRGQPFWLTLHFEGRGYEAGVDTLTFNAVTGPDPSEEAGTMARFSLSSAVEGGTWSASAVDQQDSTVSLLLSTPADAPIGLYRLSLEASTGYQGSSFVLGHFILLYNPRCPADAVYMDSDQERQEYVLTQQGFIYQGSAKFINGIPWNFGQFEDGILDICLMLLDTNPKFLKNAGQDCSRRSRPVYVGRVVSAMVNCNDDQGVLQGRWDNNYSDGVSPMSWIGSVDILRRWKDYGCQRVKYGQCWVFAAVACTVLRCLGIPTRVVTNFNSAHDQNSNLLIEYFRNESGEIEGNKSEMIWNFHCWVESWMTRPDLEPGYEGWQALDPTPQEKSEGTYCCGPVPVRAIKEGHLNVKYDAPFVFAEVNADVVNWIRQKDGSLRKSINHLVVGLKISTKSVGRDEREDITHTYKYPEGSEEEREAFVRANHLNKLATKEEAQEETGVAMRIRVGQNMTMGSDFDIFAYITNGTAESHECQLLLCARIVSYNGVLGPVCSTNDLLNLTLDPFSENSIPLHILYEKYGDYLTESNLIKVRGLLIEPAANSYVLAERDIYLENPEIKIRVLGEPKQNRKLIAEVSLKNPLPVPLLGCIFTVEGAGLTKDQKSVEVPDPVEAGEQAKVRVDLLPTEVGLHKLVVNFECDKLKAVKGYRNVIIGPA</sequence>
<reference key="1">
    <citation type="journal article" date="1988" name="Biochemistry">
        <title>Amino acid sequence of guinea pig liver transglutaminase from its cDNA sequence.</title>
        <authorList>
            <person name="Ikura K."/>
            <person name="Nasu T.-A."/>
            <person name="Yokota H."/>
            <person name="Tsuchiya Y."/>
            <person name="Sasaki R."/>
            <person name="Chiba H."/>
        </authorList>
    </citation>
    <scope>NUCLEOTIDE SEQUENCE [MRNA]</scope>
    <source>
        <tissue>Liver</tissue>
    </source>
</reference>
<reference key="2">
    <citation type="journal article" date="1971" name="J. Biol. Chem.">
        <title>Structural properties of guinea pig liver transglutaminase.</title>
        <authorList>
            <person name="Connellan J.M."/>
            <person name="Chung S.I."/>
            <person name="Whetzel N.K."/>
            <person name="Bradley L.M."/>
            <person name="Folk J.E."/>
        </authorList>
    </citation>
    <scope>PROTEIN SEQUENCE OF 2-5</scope>
    <source>
        <tissue>Liver</tissue>
    </source>
</reference>
<reference key="3">
    <citation type="journal article" date="1989" name="Biochemistry">
        <title>Determination of amino- and carboxyl-terminal sequences of guinea pig liver transglutaminase: evidence for amino-terminal processing.</title>
        <authorList>
            <person name="Ikura K."/>
            <person name="Yokota H."/>
            <person name="Sasaki R."/>
            <person name="Chiba H."/>
        </authorList>
    </citation>
    <scope>PROTEIN SEQUENCE OF 2-8 AND 684-690</scope>
    <scope>CLEAVAGE OF INITIATOR METHIONINE</scope>
    <scope>ACETYLATION AT ALA-2</scope>
    <scope>IDENTIFICATION BY MASS SPECTROMETRY</scope>
    <source>
        <tissue>Liver</tissue>
    </source>
</reference>
<reference key="4">
    <citation type="journal article" date="1987" name="Agric. Biol. Chem.">
        <title>Cloning of cDNA coding for guinea pig liver transglutaminase.</title>
        <authorList>
            <person name="Ikura K."/>
            <person name="Nasu T.-A."/>
            <person name="Yokota H."/>
            <person name="Sasaki R."/>
            <person name="Chiba H."/>
        </authorList>
    </citation>
    <scope>NUCLEOTIDE SEQUENCE [MRNA] OF 189-632</scope>
    <source>
        <tissue>Liver</tissue>
    </source>
</reference>
<reference key="5">
    <citation type="journal article" date="1987" name="J. Biol. Chem.">
        <title>Identification of a guanosine triphosphate-binding site on guinea pig liver transglutaminase. Role of GTP and calcium ions in modulating activity.</title>
        <authorList>
            <person name="Achyuthan K.E."/>
            <person name="Greenberg C.S."/>
        </authorList>
    </citation>
    <scope>ACTIVITY REGULATION</scope>
</reference>
<reference key="6">
    <citation type="journal article" date="1993" name="J. Food Biochem.">
        <title>Gliadin modifications catalyzed by guinea pig liver transglutaminase.</title>
        <authorList>
            <person name="Larre C."/>
            <person name="Chiarello M."/>
            <person name="Blanloeil Y."/>
            <person name="Chenu M."/>
            <person name="Gueguen J."/>
        </authorList>
    </citation>
    <scope>FUNCTION</scope>
</reference>
<reference key="7">
    <citation type="journal article" date="2003" name="Cell">
        <title>Serotonylation of small GTPases is a signal transduction pathway that triggers platelet alpha-granule release.</title>
        <authorList>
            <person name="Walther D.J."/>
            <person name="Peter J.U."/>
            <person name="Winter S."/>
            <person name="Hoeltje M."/>
            <person name="Paulmann N."/>
            <person name="Grohmann M."/>
            <person name="Vowinckel J."/>
            <person name="Alamo-Bethencourt V."/>
            <person name="Wilhelm C.S."/>
            <person name="Ahnert-Hilger G."/>
            <person name="Bader M."/>
        </authorList>
    </citation>
    <scope>FUNCTION</scope>
    <scope>CATALYTIC ACTIVITY</scope>
</reference>
<reference key="8">
    <citation type="journal article" date="2006" name="Proteins">
        <title>Site-specific transamidation and deamidation of the small heat-shock protein Hsp20 by tissue transglutaminase.</title>
        <authorList>
            <person name="Boros S."/>
            <person name="Ahrman E."/>
            <person name="Wunderink L."/>
            <person name="Kamps B."/>
            <person name="de Jong W.W."/>
            <person name="Boelens W.C."/>
            <person name="Emanuelsson C.S."/>
        </authorList>
    </citation>
    <scope>FUNCTION</scope>
    <scope>CATALYTIC ACTIVITY</scope>
</reference>
<reference key="9">
    <citation type="journal article" date="2012" name="FEBS Lett.">
        <title>Transglutaminase-mediated transamidation of serotonin, dopamine and noradrenaline to fibronectin: evidence for a general mechanism of monoaminylation.</title>
        <authorList>
            <person name="Hummerich R."/>
            <person name="Thumfart J.O."/>
            <person name="Findeisen P."/>
            <person name="Bartsch D."/>
            <person name="Schloss P."/>
        </authorList>
    </citation>
    <scope>FUNCTION</scope>
    <scope>CATALYTIC ACTIVITY</scope>
    <scope>BIOPHYSICOCHEMICAL PROPERTIES</scope>
</reference>
<reference key="10">
    <citation type="journal article" date="2012" name="FEBS Lett.">
        <title>Histaminylation of glutamine residues is a novel posttranslational modification implicated in G-protein signaling.</title>
        <authorList>
            <person name="Vowinckel J."/>
            <person name="Stahlberg S."/>
            <person name="Paulmann N."/>
            <person name="Bluemlein K."/>
            <person name="Grohmann M."/>
            <person name="Ralser M."/>
            <person name="Walther D.J."/>
        </authorList>
    </citation>
    <scope>FUNCTION</scope>
    <scope>CATALYTIC ACTIVITY</scope>
</reference>
<reference key="11">
    <citation type="journal article" date="2018" name="J. Biol. Chem.">
        <title>The proinflammatory protein HMGB1 is a substrate of transglutaminase-2 and forms high-molecular weight complexes with autoantigens.</title>
        <authorList>
            <person name="Willis W.L."/>
            <person name="Wang L."/>
            <person name="Wada T.T."/>
            <person name="Gardner M."/>
            <person name="Abdouni O."/>
            <person name="Hampton J."/>
            <person name="Valiente G."/>
            <person name="Young N."/>
            <person name="Ardoin S."/>
            <person name="Agarwal S."/>
            <person name="Freitas M.A."/>
            <person name="Wu L.C."/>
            <person name="Jarjour W.N."/>
        </authorList>
    </citation>
    <scope>FUNCTION</scope>
    <scope>CATALYTIC ACTIVITY</scope>
    <scope>TRANSGLUTAMINATION AT GLN-636</scope>
</reference>
<comment type="function">
    <text evidence="2 3 7 8 9 10 13 15">Calcium-dependent acyltransferase that catalyzes the formation of covalent bonds between peptide-bound glutamine and various primary amines, such as gamma-amino group of peptide-bound lysine, or mono- and polyamines, thereby producing cross-linked or aminated proteins, respectively (PubMed:14697203, PubMed:16385579, PubMed:22858378, PubMed:23022564). Involved in many biological processes, such as bone development, angiogenesis, wound healing, cellular differentiation, chromatin modification and apoptosis (By similarity). Acts as a protein-glutamine gamma-glutamyltransferase by mediating the cross-linking of proteins, such as ACO2, HSPB6, FN1, HMGB1, RAP1GDS1, SLC25A4/ANT1, SPP1 and WDR54 (PubMed:16385579, PubMed:29618516). Under physiological conditions, the protein cross-linking activity is inhibited by GTP; inhibition is relieved by Ca(2+) in response to various stresses (By similarity). When secreted, catalyzes cross-linking of proteins of the extracellular matrix, such as FN1 and SPP1 resulting in the formation of scaffolds (By similarity). Plays a key role during apoptosis, both by (1) promoting the cross-linking of cytoskeletal proteins resulting in condensation of the cytoplasm, and by (2) mediating cross-linking proteins of the extracellular matrix, resulting in the irreversible formation of scaffolds that stabilize the integrity of the dying cells before their clearance by phagocytosis, thereby preventing the leakage of harmful intracellular components (By similarity). In addition to protein cross-linking, can use different monoamine substrates to catalyze a vast array of protein post-translational modifications: mediates aminylation of serotonin, dopamine, noradrenaline or histamine into glutamine residues of target proteins to generate protein serotonylation, dopaminylation, noradrenalinylation or histaminylation, respectively (PubMed:14697203, PubMed:22858378, PubMed:23022564). Mediates protein serotonylation of small GTPases during activation and aggregation of platelets, leading to constitutive activation of these GTPases (PubMed:14697203). Plays a key role in chromatin organization by mediating serotonylation and dopaminylation of histone H3 (By similarity). Catalyzes serotonylation of 'Gln-5' of histone H3 (H3Q5ser) during serotonergic neuron differentiation, thereby facilitating transcription (By similarity). Acts as a mediator of neurotransmission-independent role of nuclear dopamine in ventral tegmental area (VTA) neurons: catalyzes dopaminylation of 'Gln-5' of histone H3 (H3Q5dop), thereby regulating relapse-related transcriptional plasticity in the reward system (By similarity). Regulates vein remodeling by mediating serotonylation and subsequent inactivation of ATP2A2/SERCA2 (By similarity). Also acts as a protein deamidase by mediating the side chain deamidation of specific glutamine residues of proteins to glutamate (PubMed:16385579). Catalyzes specific deamidation of protein gliadin, a component of wheat gluten in the diet (Ref.6). May also act as an isopeptidase cleaving the previously formed cross-links (By similarity). Also able to participate in signaling pathways independently of its acyltransferase activity: acts as a signal transducer in alpha-1 adrenergic receptor-mediated stimulation of phospholipase C-delta (PLCD) activity and is required for coupling alpha-1 adrenergic agonists to the stimulation of phosphoinositide lipid metabolism (By similarity).</text>
</comment>
<comment type="catalytic activity">
    <reaction evidence="6 8 13">
        <text>L-glutaminyl-[protein] + L-lysyl-[protein] = [protein]-L-lysyl-N(6)-5-L-glutamyl-[protein] + NH4(+)</text>
        <dbReference type="Rhea" id="RHEA:54816"/>
        <dbReference type="Rhea" id="RHEA-COMP:9752"/>
        <dbReference type="Rhea" id="RHEA-COMP:10207"/>
        <dbReference type="Rhea" id="RHEA-COMP:14005"/>
        <dbReference type="ChEBI" id="CHEBI:28938"/>
        <dbReference type="ChEBI" id="CHEBI:29969"/>
        <dbReference type="ChEBI" id="CHEBI:30011"/>
        <dbReference type="ChEBI" id="CHEBI:138370"/>
        <dbReference type="EC" id="2.3.2.13"/>
    </reaction>
    <physiologicalReaction direction="left-to-right" evidence="8 13">
        <dbReference type="Rhea" id="RHEA:54817"/>
    </physiologicalReaction>
</comment>
<comment type="catalytic activity">
    <reaction evidence="7 9">
        <text>L-glutaminyl-[protein] + serotonin = 5-serotonyl-L-glutamyl-[protein] + NH4(+)</text>
        <dbReference type="Rhea" id="RHEA:66552"/>
        <dbReference type="Rhea" id="RHEA-COMP:10207"/>
        <dbReference type="Rhea" id="RHEA-COMP:17052"/>
        <dbReference type="ChEBI" id="CHEBI:28938"/>
        <dbReference type="ChEBI" id="CHEBI:30011"/>
        <dbReference type="ChEBI" id="CHEBI:167174"/>
        <dbReference type="ChEBI" id="CHEBI:350546"/>
    </reaction>
    <physiologicalReaction direction="left-to-right" evidence="7 9">
        <dbReference type="Rhea" id="RHEA:66553"/>
    </physiologicalReaction>
</comment>
<comment type="catalytic activity">
    <reaction evidence="9">
        <text>L-glutaminyl-[protein] + dopamine = 5-dopaminyl-L-glutamyl-[protein] + NH4(+)</text>
        <dbReference type="Rhea" id="RHEA:66556"/>
        <dbReference type="Rhea" id="RHEA-COMP:10207"/>
        <dbReference type="Rhea" id="RHEA-COMP:17053"/>
        <dbReference type="ChEBI" id="CHEBI:28938"/>
        <dbReference type="ChEBI" id="CHEBI:30011"/>
        <dbReference type="ChEBI" id="CHEBI:59905"/>
        <dbReference type="ChEBI" id="CHEBI:167175"/>
    </reaction>
    <physiologicalReaction direction="left-to-right" evidence="9">
        <dbReference type="Rhea" id="RHEA:66557"/>
    </physiologicalReaction>
</comment>
<comment type="catalytic activity">
    <reaction evidence="10">
        <text>L-glutaminyl-[protein] + histamine = 5-histaminyl-L-glutamyl-[protein] + NH4(+)</text>
        <dbReference type="Rhea" id="RHEA:66564"/>
        <dbReference type="Rhea" id="RHEA-COMP:10207"/>
        <dbReference type="Rhea" id="RHEA-COMP:17056"/>
        <dbReference type="ChEBI" id="CHEBI:28938"/>
        <dbReference type="ChEBI" id="CHEBI:30011"/>
        <dbReference type="ChEBI" id="CHEBI:58432"/>
        <dbReference type="ChEBI" id="CHEBI:167179"/>
    </reaction>
    <physiologicalReaction direction="left-to-right" evidence="10">
        <dbReference type="Rhea" id="RHEA:66565"/>
    </physiologicalReaction>
</comment>
<comment type="catalytic activity">
    <reaction evidence="9">
        <text>L-glutaminyl-[protein] + (R)-noradrenaline = 5-(R)-noradrenalinyl-L-glutamyl-[protein] + NH4(+)</text>
        <dbReference type="Rhea" id="RHEA:66560"/>
        <dbReference type="Rhea" id="RHEA-COMP:10207"/>
        <dbReference type="Rhea" id="RHEA-COMP:17054"/>
        <dbReference type="ChEBI" id="CHEBI:28938"/>
        <dbReference type="ChEBI" id="CHEBI:30011"/>
        <dbReference type="ChEBI" id="CHEBI:72587"/>
        <dbReference type="ChEBI" id="CHEBI:167178"/>
    </reaction>
    <physiologicalReaction direction="left-to-right" evidence="9">
        <dbReference type="Rhea" id="RHEA:66561"/>
    </physiologicalReaction>
</comment>
<comment type="catalytic activity">
    <reaction evidence="8">
        <text>L-glutaminyl-[protein] + H2O = L-glutamyl-[protein] + NH4(+)</text>
        <dbReference type="Rhea" id="RHEA:16441"/>
        <dbReference type="Rhea" id="RHEA-COMP:10207"/>
        <dbReference type="Rhea" id="RHEA-COMP:10208"/>
        <dbReference type="ChEBI" id="CHEBI:15377"/>
        <dbReference type="ChEBI" id="CHEBI:28938"/>
        <dbReference type="ChEBI" id="CHEBI:29973"/>
        <dbReference type="ChEBI" id="CHEBI:30011"/>
        <dbReference type="EC" id="3.5.1.44"/>
    </reaction>
    <physiologicalReaction direction="left-to-right" evidence="8">
        <dbReference type="Rhea" id="RHEA:16442"/>
    </physiologicalReaction>
</comment>
<comment type="cofactor">
    <cofactor evidence="2">
        <name>Ca(2+)</name>
        <dbReference type="ChEBI" id="CHEBI:29108"/>
    </cofactor>
</comment>
<comment type="activity regulation">
    <text evidence="2 12">Acyltransferase activity is regulated by the binding of GTP and Ca(2+): inactivated by GTP, which stabilizes its closed structure, thereby obstructing the accessibility of substrates to the active sites (PubMed:2879844). In contrast, Ca(2+) acts as a cofactor by inducing conformational change to the active open form (PubMed:2879844). In absence of Ca(2+), Mg(2+) may bind Ca(2+)-binding sites, promoting GTP-binding and subsequent inhibition of the acyltransferase activity (By similarity). Extracellularly reduced and activated by CLIC3.</text>
</comment>
<comment type="biophysicochemical properties">
    <kinetics>
        <KM evidence="9">794.1 nM for serotonin (for protein-glutamine serotonyltransferase activity)</KM>
    </kinetics>
</comment>
<comment type="subunit">
    <text evidence="2 5">Monomer. Interacts with phospholipase C; promoting alpha-1 adrenergic receptor signaling (By similarity). Interacts with PLCD1 (By similarity).</text>
</comment>
<comment type="subcellular location">
    <subcellularLocation>
        <location evidence="2">Cytoplasm</location>
        <location evidence="2">Cytosol</location>
    </subcellularLocation>
    <subcellularLocation>
        <location evidence="2">Nucleus</location>
    </subcellularLocation>
    <subcellularLocation>
        <location evidence="2">Chromosome</location>
    </subcellularLocation>
    <subcellularLocation>
        <location evidence="2">Secreted</location>
        <location evidence="2">Extracellular space</location>
        <location evidence="2">Extracellular matrix</location>
    </subcellularLocation>
    <subcellularLocation>
        <location evidence="5">Cell membrane</location>
    </subcellularLocation>
    <subcellularLocation>
        <location evidence="2">Mitochondrion</location>
    </subcellularLocation>
    <text evidence="2">Mainly localizes to the cytosol. Present at much lower level in the nucleus and chromatin. Also secreted via a non-classical secretion pathway to the extracellular matrix.</text>
</comment>
<comment type="PTM">
    <text evidence="2">Disulfide bond formation inactivates the calcium-dependent acyltransferase activity. Cys-370 can form disulfide bonds with both Cys-230 and Cys-371: formation of a disulfide bond between Cys-230 and Cys-370 facilitates formation of the disulfide between Cys-370 and Cys-371, which promotes inactivation of the acyltransferase activity. May also form interchain disulfids between Cys-230 and Cys-370. Ca(2+) protects against disulfide bond formation and inactivation.</text>
</comment>
<comment type="PTM">
    <text evidence="13">Auto-transglutaminated: Forms covalent cross-links mediated by transglutaminase between Gln-636 and the epsilon-amino group of a lysine residue of itself or HMGB1, forming homopolymers and heteropolymers, respectively.</text>
</comment>
<comment type="PTM">
    <text evidence="3">S-nitrosylated, leading to inactivation of the acyltransferase activity.</text>
</comment>
<comment type="similarity">
    <text evidence="20">Belongs to the transglutaminase superfamily. Transglutaminase family.</text>
</comment>
<protein>
    <recommendedName>
        <fullName evidence="20">Protein-glutamine gamma-glutamyltransferase 2</fullName>
        <ecNumber evidence="8 13">2.3.2.13</ecNumber>
    </recommendedName>
    <alternativeName>
        <fullName evidence="18 19">Guinea pig liver transglutaminase</fullName>
    </alternativeName>
    <alternativeName>
        <fullName evidence="20">Isopeptidase TGM2</fullName>
        <ecNumber evidence="2">3.4.-.-</ecNumber>
    </alternativeName>
    <alternativeName>
        <fullName evidence="20">Protein-glutamine deamidase TGM2</fullName>
        <ecNumber evidence="8">3.5.1.44</ecNumber>
    </alternativeName>
    <alternativeName>
        <fullName evidence="20">Protein-glutamine dopaminyltransferase TGM2</fullName>
        <ecNumber evidence="9">2.3.1.-</ecNumber>
    </alternativeName>
    <alternativeName>
        <fullName evidence="20">Protein-glutamine histaminyltransferase TGM2</fullName>
        <ecNumber evidence="10">2.3.1.-</ecNumber>
    </alternativeName>
    <alternativeName>
        <fullName evidence="20">Protein-glutamine noradrenalinyltransferase TGM2</fullName>
        <ecNumber evidence="9">2.3.1.-</ecNumber>
    </alternativeName>
    <alternativeName>
        <fullName evidence="20">Protein-glutamine serotonyltransferase TGM2</fullName>
        <ecNumber evidence="7 9">2.3.1.-</ecNumber>
    </alternativeName>
    <alternativeName>
        <fullName evidence="16">Tissue transglutaminase</fullName>
        <shortName evidence="16">tTG</shortName>
        <shortName evidence="17">tTgase</shortName>
    </alternativeName>
    <alternativeName>
        <fullName evidence="2">Transglutaminase-2</fullName>
        <shortName evidence="2">TGase-2</shortName>
    </alternativeName>
</protein>
<organism>
    <name type="scientific">Cavia cutleri</name>
    <name type="common">Guinea pig</name>
    <dbReference type="NCBI Taxonomy" id="10144"/>
    <lineage>
        <taxon>Eukaryota</taxon>
        <taxon>Metazoa</taxon>
        <taxon>Chordata</taxon>
        <taxon>Craniata</taxon>
        <taxon>Vertebrata</taxon>
        <taxon>Euteleostomi</taxon>
        <taxon>Mammalia</taxon>
        <taxon>Eutheria</taxon>
        <taxon>Euarchontoglires</taxon>
        <taxon>Glires</taxon>
        <taxon>Rodentia</taxon>
        <taxon>Hystricomorpha</taxon>
        <taxon>Caviidae</taxon>
        <taxon>Cavia</taxon>
    </lineage>
</organism>